<protein>
    <recommendedName>
        <fullName evidence="1">Ketol-acid reductoisomerase (NADP(+))</fullName>
        <shortName evidence="1">KARI</shortName>
        <ecNumber evidence="1">1.1.1.86</ecNumber>
    </recommendedName>
    <alternativeName>
        <fullName evidence="1">Acetohydroxy-acid isomeroreductase</fullName>
        <shortName evidence="1">AHIR</shortName>
    </alternativeName>
    <alternativeName>
        <fullName evidence="1">Alpha-keto-beta-hydroxylacyl reductoisomerase</fullName>
    </alternativeName>
    <alternativeName>
        <fullName evidence="1">Ketol-acid reductoisomerase type 1</fullName>
    </alternativeName>
    <alternativeName>
        <fullName evidence="1">Ketol-acid reductoisomerase type I</fullName>
    </alternativeName>
</protein>
<sequence>MSNDTQPTIAIIGYGSQGRAHALNLRDSGFDVTVGLRPGGPTEAKAQADGFTVVAPAEAVKTADLVAVLTPDMVQKKLYEEVIAPNMKQGACLLFAHGLNVHFDMIKPRADLDVVLVAPKGPGALVRREYEIGRGVPCIYAVYQDTSGKAEQFALTYAGGLGGARANIIKTTFKEETETDLFGEQAVLCGGASSLVQAGFEVLVEAGYQPEIAYYEVLHELKLIVDLFYEGGITRMLEFVSETAQYGDYVSGPRVIDASTKARMKDVLTDIQNGTFTKNWVAEYEAGLPNYTKFKQADLEHPIEEVGKKLRAKMVWLNGEQQAAATPAKQQAA</sequence>
<proteinExistence type="inferred from homology"/>
<reference key="1">
    <citation type="journal article" date="2002" name="Nature">
        <title>Comparison of the genomes of two Xanthomonas pathogens with differing host specificities.</title>
        <authorList>
            <person name="da Silva A.C.R."/>
            <person name="Ferro J.A."/>
            <person name="Reinach F.C."/>
            <person name="Farah C.S."/>
            <person name="Furlan L.R."/>
            <person name="Quaggio R.B."/>
            <person name="Monteiro-Vitorello C.B."/>
            <person name="Van Sluys M.A."/>
            <person name="Almeida N.F. Jr."/>
            <person name="Alves L.M.C."/>
            <person name="do Amaral A.M."/>
            <person name="Bertolini M.C."/>
            <person name="Camargo L.E.A."/>
            <person name="Camarotte G."/>
            <person name="Cannavan F."/>
            <person name="Cardozo J."/>
            <person name="Chambergo F."/>
            <person name="Ciapina L.P."/>
            <person name="Cicarelli R.M.B."/>
            <person name="Coutinho L.L."/>
            <person name="Cursino-Santos J.R."/>
            <person name="El-Dorry H."/>
            <person name="Faria J.B."/>
            <person name="Ferreira A.J.S."/>
            <person name="Ferreira R.C.C."/>
            <person name="Ferro M.I.T."/>
            <person name="Formighieri E.F."/>
            <person name="Franco M.C."/>
            <person name="Greggio C.C."/>
            <person name="Gruber A."/>
            <person name="Katsuyama A.M."/>
            <person name="Kishi L.T."/>
            <person name="Leite R.P."/>
            <person name="Lemos E.G.M."/>
            <person name="Lemos M.V.F."/>
            <person name="Locali E.C."/>
            <person name="Machado M.A."/>
            <person name="Madeira A.M.B.N."/>
            <person name="Martinez-Rossi N.M."/>
            <person name="Martins E.C."/>
            <person name="Meidanis J."/>
            <person name="Menck C.F.M."/>
            <person name="Miyaki C.Y."/>
            <person name="Moon D.H."/>
            <person name="Moreira L.M."/>
            <person name="Novo M.T.M."/>
            <person name="Okura V.K."/>
            <person name="Oliveira M.C."/>
            <person name="Oliveira V.R."/>
            <person name="Pereira H.A."/>
            <person name="Rossi A."/>
            <person name="Sena J.A.D."/>
            <person name="Silva C."/>
            <person name="de Souza R.F."/>
            <person name="Spinola L.A.F."/>
            <person name="Takita M.A."/>
            <person name="Tamura R.E."/>
            <person name="Teixeira E.C."/>
            <person name="Tezza R.I.D."/>
            <person name="Trindade dos Santos M."/>
            <person name="Truffi D."/>
            <person name="Tsai S.M."/>
            <person name="White F.F."/>
            <person name="Setubal J.C."/>
            <person name="Kitajima J.P."/>
        </authorList>
    </citation>
    <scope>NUCLEOTIDE SEQUENCE [LARGE SCALE GENOMIC DNA]</scope>
    <source>
        <strain>ATCC 33913 / DSM 3586 / NCPPB 528 / LMG 568 / P 25</strain>
    </source>
</reference>
<feature type="chain" id="PRO_0000151384" description="Ketol-acid reductoisomerase (NADP(+))">
    <location>
        <begin position="1"/>
        <end position="333"/>
    </location>
</feature>
<feature type="domain" description="KARI N-terminal Rossmann" evidence="2">
    <location>
        <begin position="1"/>
        <end position="171"/>
    </location>
</feature>
<feature type="domain" description="KARI C-terminal knotted" evidence="3">
    <location>
        <begin position="172"/>
        <end position="317"/>
    </location>
</feature>
<feature type="active site" evidence="1">
    <location>
        <position position="97"/>
    </location>
</feature>
<feature type="binding site" evidence="1">
    <location>
        <begin position="14"/>
        <end position="17"/>
    </location>
    <ligand>
        <name>NADP(+)</name>
        <dbReference type="ChEBI" id="CHEBI:58349"/>
    </ligand>
</feature>
<feature type="binding site" evidence="1">
    <location>
        <position position="37"/>
    </location>
    <ligand>
        <name>NADP(+)</name>
        <dbReference type="ChEBI" id="CHEBI:58349"/>
    </ligand>
</feature>
<feature type="binding site" evidence="1">
    <location>
        <position position="42"/>
    </location>
    <ligand>
        <name>NADP(+)</name>
        <dbReference type="ChEBI" id="CHEBI:58349"/>
    </ligand>
</feature>
<feature type="binding site" evidence="1">
    <location>
        <begin position="72"/>
        <end position="75"/>
    </location>
    <ligand>
        <name>NADP(+)</name>
        <dbReference type="ChEBI" id="CHEBI:58349"/>
    </ligand>
</feature>
<feature type="binding site" evidence="1">
    <location>
        <position position="123"/>
    </location>
    <ligand>
        <name>NADP(+)</name>
        <dbReference type="ChEBI" id="CHEBI:58349"/>
    </ligand>
</feature>
<feature type="binding site" evidence="1">
    <location>
        <position position="180"/>
    </location>
    <ligand>
        <name>Mg(2+)</name>
        <dbReference type="ChEBI" id="CHEBI:18420"/>
        <label>1</label>
    </ligand>
</feature>
<feature type="binding site" evidence="1">
    <location>
        <position position="180"/>
    </location>
    <ligand>
        <name>Mg(2+)</name>
        <dbReference type="ChEBI" id="CHEBI:18420"/>
        <label>2</label>
    </ligand>
</feature>
<feature type="binding site" evidence="1">
    <location>
        <position position="184"/>
    </location>
    <ligand>
        <name>Mg(2+)</name>
        <dbReference type="ChEBI" id="CHEBI:18420"/>
        <label>1</label>
    </ligand>
</feature>
<feature type="binding site" evidence="1">
    <location>
        <position position="216"/>
    </location>
    <ligand>
        <name>Mg(2+)</name>
        <dbReference type="ChEBI" id="CHEBI:18420"/>
        <label>2</label>
    </ligand>
</feature>
<feature type="binding site" evidence="1">
    <location>
        <position position="220"/>
    </location>
    <ligand>
        <name>Mg(2+)</name>
        <dbReference type="ChEBI" id="CHEBI:18420"/>
        <label>2</label>
    </ligand>
</feature>
<feature type="binding site" evidence="1">
    <location>
        <position position="241"/>
    </location>
    <ligand>
        <name>substrate</name>
    </ligand>
</feature>
<keyword id="KW-0028">Amino-acid biosynthesis</keyword>
<keyword id="KW-0100">Branched-chain amino acid biosynthesis</keyword>
<keyword id="KW-0460">Magnesium</keyword>
<keyword id="KW-0479">Metal-binding</keyword>
<keyword id="KW-0521">NADP</keyword>
<keyword id="KW-0560">Oxidoreductase</keyword>
<keyword id="KW-1185">Reference proteome</keyword>
<dbReference type="EC" id="1.1.1.86" evidence="1"/>
<dbReference type="EMBL" id="AE008922">
    <property type="protein sequence ID" value="AAM42593.1"/>
    <property type="molecule type" value="Genomic_DNA"/>
</dbReference>
<dbReference type="RefSeq" id="NP_638669.1">
    <property type="nucleotide sequence ID" value="NC_003902.1"/>
</dbReference>
<dbReference type="RefSeq" id="WP_011038422.1">
    <property type="nucleotide sequence ID" value="NC_003902.1"/>
</dbReference>
<dbReference type="SMR" id="Q8P5L5"/>
<dbReference type="STRING" id="190485.XCC3323"/>
<dbReference type="EnsemblBacteria" id="AAM42593">
    <property type="protein sequence ID" value="AAM42593"/>
    <property type="gene ID" value="XCC3323"/>
</dbReference>
<dbReference type="GeneID" id="58012143"/>
<dbReference type="KEGG" id="xcc:XCC3323"/>
<dbReference type="PATRIC" id="fig|190485.4.peg.3554"/>
<dbReference type="eggNOG" id="COG0059">
    <property type="taxonomic scope" value="Bacteria"/>
</dbReference>
<dbReference type="HOGENOM" id="CLU_033821_0_1_6"/>
<dbReference type="OrthoDB" id="9804088at2"/>
<dbReference type="UniPathway" id="UPA00047">
    <property type="reaction ID" value="UER00056"/>
</dbReference>
<dbReference type="UniPathway" id="UPA00049">
    <property type="reaction ID" value="UER00060"/>
</dbReference>
<dbReference type="Proteomes" id="UP000001010">
    <property type="component" value="Chromosome"/>
</dbReference>
<dbReference type="GO" id="GO:0005829">
    <property type="term" value="C:cytosol"/>
    <property type="evidence" value="ECO:0000318"/>
    <property type="project" value="GO_Central"/>
</dbReference>
<dbReference type="GO" id="GO:0004455">
    <property type="term" value="F:ketol-acid reductoisomerase activity"/>
    <property type="evidence" value="ECO:0000318"/>
    <property type="project" value="GO_Central"/>
</dbReference>
<dbReference type="GO" id="GO:0000287">
    <property type="term" value="F:magnesium ion binding"/>
    <property type="evidence" value="ECO:0007669"/>
    <property type="project" value="UniProtKB-UniRule"/>
</dbReference>
<dbReference type="GO" id="GO:0050661">
    <property type="term" value="F:NADP binding"/>
    <property type="evidence" value="ECO:0007669"/>
    <property type="project" value="InterPro"/>
</dbReference>
<dbReference type="GO" id="GO:0009097">
    <property type="term" value="P:isoleucine biosynthetic process"/>
    <property type="evidence" value="ECO:0000318"/>
    <property type="project" value="GO_Central"/>
</dbReference>
<dbReference type="GO" id="GO:0009099">
    <property type="term" value="P:L-valine biosynthetic process"/>
    <property type="evidence" value="ECO:0000318"/>
    <property type="project" value="GO_Central"/>
</dbReference>
<dbReference type="FunFam" id="3.40.50.720:FF:000023">
    <property type="entry name" value="Ketol-acid reductoisomerase (NADP(+))"/>
    <property type="match status" value="1"/>
</dbReference>
<dbReference type="Gene3D" id="6.10.240.10">
    <property type="match status" value="1"/>
</dbReference>
<dbReference type="Gene3D" id="3.40.50.720">
    <property type="entry name" value="NAD(P)-binding Rossmann-like Domain"/>
    <property type="match status" value="1"/>
</dbReference>
<dbReference type="HAMAP" id="MF_00435">
    <property type="entry name" value="IlvC"/>
    <property type="match status" value="1"/>
</dbReference>
<dbReference type="InterPro" id="IPR008927">
    <property type="entry name" value="6-PGluconate_DH-like_C_sf"/>
</dbReference>
<dbReference type="InterPro" id="IPR013023">
    <property type="entry name" value="KARI"/>
</dbReference>
<dbReference type="InterPro" id="IPR000506">
    <property type="entry name" value="KARI_C"/>
</dbReference>
<dbReference type="InterPro" id="IPR013116">
    <property type="entry name" value="KARI_N"/>
</dbReference>
<dbReference type="InterPro" id="IPR014359">
    <property type="entry name" value="KARI_prok"/>
</dbReference>
<dbReference type="InterPro" id="IPR036291">
    <property type="entry name" value="NAD(P)-bd_dom_sf"/>
</dbReference>
<dbReference type="NCBIfam" id="TIGR00465">
    <property type="entry name" value="ilvC"/>
    <property type="match status" value="1"/>
</dbReference>
<dbReference type="NCBIfam" id="NF004017">
    <property type="entry name" value="PRK05479.1"/>
    <property type="match status" value="1"/>
</dbReference>
<dbReference type="PANTHER" id="PTHR21371">
    <property type="entry name" value="KETOL-ACID REDUCTOISOMERASE, MITOCHONDRIAL"/>
    <property type="match status" value="1"/>
</dbReference>
<dbReference type="PANTHER" id="PTHR21371:SF1">
    <property type="entry name" value="KETOL-ACID REDUCTOISOMERASE, MITOCHONDRIAL"/>
    <property type="match status" value="1"/>
</dbReference>
<dbReference type="Pfam" id="PF01450">
    <property type="entry name" value="KARI_C"/>
    <property type="match status" value="1"/>
</dbReference>
<dbReference type="Pfam" id="PF07991">
    <property type="entry name" value="KARI_N"/>
    <property type="match status" value="1"/>
</dbReference>
<dbReference type="PIRSF" id="PIRSF000116">
    <property type="entry name" value="IlvC_gammaproteo"/>
    <property type="match status" value="1"/>
</dbReference>
<dbReference type="SUPFAM" id="SSF48179">
    <property type="entry name" value="6-phosphogluconate dehydrogenase C-terminal domain-like"/>
    <property type="match status" value="1"/>
</dbReference>
<dbReference type="SUPFAM" id="SSF51735">
    <property type="entry name" value="NAD(P)-binding Rossmann-fold domains"/>
    <property type="match status" value="1"/>
</dbReference>
<dbReference type="PROSITE" id="PS51851">
    <property type="entry name" value="KARI_C"/>
    <property type="match status" value="1"/>
</dbReference>
<dbReference type="PROSITE" id="PS51850">
    <property type="entry name" value="KARI_N"/>
    <property type="match status" value="1"/>
</dbReference>
<comment type="function">
    <text evidence="1">Involved in the biosynthesis of branched-chain amino acids (BCAA). Catalyzes an alkyl-migration followed by a ketol-acid reduction of (S)-2-acetolactate (S2AL) to yield (R)-2,3-dihydroxy-isovalerate. In the isomerase reaction, S2AL is rearranged via a Mg-dependent methyl migration to produce 3-hydroxy-3-methyl-2-ketobutyrate (HMKB). In the reductase reaction, this 2-ketoacid undergoes a metal-dependent reduction by NADPH to yield (R)-2,3-dihydroxy-isovalerate.</text>
</comment>
<comment type="catalytic activity">
    <reaction evidence="1">
        <text>(2R)-2,3-dihydroxy-3-methylbutanoate + NADP(+) = (2S)-2-acetolactate + NADPH + H(+)</text>
        <dbReference type="Rhea" id="RHEA:22068"/>
        <dbReference type="ChEBI" id="CHEBI:15378"/>
        <dbReference type="ChEBI" id="CHEBI:49072"/>
        <dbReference type="ChEBI" id="CHEBI:57783"/>
        <dbReference type="ChEBI" id="CHEBI:58349"/>
        <dbReference type="ChEBI" id="CHEBI:58476"/>
        <dbReference type="EC" id="1.1.1.86"/>
    </reaction>
</comment>
<comment type="catalytic activity">
    <reaction evidence="1">
        <text>(2R,3R)-2,3-dihydroxy-3-methylpentanoate + NADP(+) = (S)-2-ethyl-2-hydroxy-3-oxobutanoate + NADPH + H(+)</text>
        <dbReference type="Rhea" id="RHEA:13493"/>
        <dbReference type="ChEBI" id="CHEBI:15378"/>
        <dbReference type="ChEBI" id="CHEBI:49256"/>
        <dbReference type="ChEBI" id="CHEBI:49258"/>
        <dbReference type="ChEBI" id="CHEBI:57783"/>
        <dbReference type="ChEBI" id="CHEBI:58349"/>
        <dbReference type="EC" id="1.1.1.86"/>
    </reaction>
</comment>
<comment type="cofactor">
    <cofactor evidence="1">
        <name>Mg(2+)</name>
        <dbReference type="ChEBI" id="CHEBI:18420"/>
    </cofactor>
    <text evidence="1">Binds 2 magnesium ions per subunit.</text>
</comment>
<comment type="pathway">
    <text evidence="1">Amino-acid biosynthesis; L-isoleucine biosynthesis; L-isoleucine from 2-oxobutanoate: step 2/4.</text>
</comment>
<comment type="pathway">
    <text evidence="1">Amino-acid biosynthesis; L-valine biosynthesis; L-valine from pyruvate: step 2/4.</text>
</comment>
<comment type="similarity">
    <text evidence="1">Belongs to the ketol-acid reductoisomerase family.</text>
</comment>
<name>ILVC_XANCP</name>
<gene>
    <name evidence="1" type="primary">ilvC</name>
    <name type="ordered locus">XCC3323</name>
</gene>
<evidence type="ECO:0000255" key="1">
    <source>
        <dbReference type="HAMAP-Rule" id="MF_00435"/>
    </source>
</evidence>
<evidence type="ECO:0000255" key="2">
    <source>
        <dbReference type="PROSITE-ProRule" id="PRU01197"/>
    </source>
</evidence>
<evidence type="ECO:0000255" key="3">
    <source>
        <dbReference type="PROSITE-ProRule" id="PRU01198"/>
    </source>
</evidence>
<organism>
    <name type="scientific">Xanthomonas campestris pv. campestris (strain ATCC 33913 / DSM 3586 / NCPPB 528 / LMG 568 / P 25)</name>
    <dbReference type="NCBI Taxonomy" id="190485"/>
    <lineage>
        <taxon>Bacteria</taxon>
        <taxon>Pseudomonadati</taxon>
        <taxon>Pseudomonadota</taxon>
        <taxon>Gammaproteobacteria</taxon>
        <taxon>Lysobacterales</taxon>
        <taxon>Lysobacteraceae</taxon>
        <taxon>Xanthomonas</taxon>
    </lineage>
</organism>
<accession>Q8P5L5</accession>